<feature type="initiator methionine" description="Removed; by host" evidence="1">
    <location>
        <position position="1"/>
    </location>
</feature>
<feature type="chain" id="PRO_0000088150" description="Tyrosine-protein kinase transforming protein Src">
    <location>
        <begin position="2"/>
        <end position="568"/>
    </location>
</feature>
<feature type="domain" description="SH3" evidence="4">
    <location>
        <begin position="81"/>
        <end position="142"/>
    </location>
</feature>
<feature type="domain" description="SH2" evidence="3">
    <location>
        <begin position="148"/>
        <end position="245"/>
    </location>
</feature>
<feature type="domain" description="Protein kinase" evidence="2">
    <location>
        <begin position="267"/>
        <end position="520"/>
    </location>
</feature>
<feature type="region of interest" description="Disordered" evidence="6">
    <location>
        <begin position="1"/>
        <end position="58"/>
    </location>
</feature>
<feature type="compositionally biased region" description="Basic and acidic residues" evidence="6">
    <location>
        <begin position="7"/>
        <end position="25"/>
    </location>
</feature>
<feature type="active site" description="Proton acceptor" evidence="2 5">
    <location>
        <position position="386"/>
    </location>
</feature>
<feature type="binding site" evidence="2">
    <location>
        <begin position="273"/>
        <end position="281"/>
    </location>
    <ligand>
        <name>ATP</name>
        <dbReference type="ChEBI" id="CHEBI:30616"/>
    </ligand>
</feature>
<feature type="binding site" evidence="2">
    <location>
        <position position="295"/>
    </location>
    <ligand>
        <name>ATP</name>
        <dbReference type="ChEBI" id="CHEBI:30616"/>
    </ligand>
</feature>
<feature type="modified residue" description="Phosphotyrosine; by autocatalysis" evidence="1">
    <location>
        <position position="416"/>
    </location>
</feature>
<feature type="lipid moiety-binding region" description="N-myristoyl glycine; by host" evidence="1">
    <location>
        <position position="2"/>
    </location>
</feature>
<sequence length="568" mass="63632">MGSSKSKPKDPSQRRRSLEPPDSTHHGGFPASQTPNKTAAPDTHRTPSRSFGTVATEPKLFGGFNTSDTVTSPQRAGALAGGVTTFVALYDYESRTETDLSFKKGERLQIVNNTEGDWWLAHSLTTGQTGYIPSNYVAPSDSIQAEEWYFGKITRRESERLLLNPENPRGTFLVRESETTKGAYCLSVSDFDNARGLNVKHYKIRKLDSGGFYITSRTQFSSLQQLVAYYSKHADGLCHRLTNVCPTSKPQTQGLAKDAWEIPRESLRLEVKLGQGCFGEVWMGTWNGTTRVAIKTLKPGTMSPEAFLQEAQVMKKLRHEKLVRLYAVVSEEPIYIVTEYMSKGSLLDFLKGEMGKYLRLPQLVDMAAQIASGMAYVERMNYVHRDLRAANILVGENLVCKVADFGLARLIEDNEYTARQGAKFPIKWTAPEAALYGRFTIKSDVWSFGILLTELTTKGRVPYPGMVNREVLDQVERGYRMPCPPECPESLHDLMCQCWRKDPEERPTFEYLQAFLEDYFTSTEPTAVHMATDPGKYTTAHKSRARVSSNTAVARPAAPVRVLLKPSV</sequence>
<organismHost>
    <name type="scientific">Galliformes</name>
    <dbReference type="NCBI Taxonomy" id="8976"/>
</organismHost>
<evidence type="ECO:0000250" key="1"/>
<evidence type="ECO:0000255" key="2">
    <source>
        <dbReference type="PROSITE-ProRule" id="PRU00159"/>
    </source>
</evidence>
<evidence type="ECO:0000255" key="3">
    <source>
        <dbReference type="PROSITE-ProRule" id="PRU00191"/>
    </source>
</evidence>
<evidence type="ECO:0000255" key="4">
    <source>
        <dbReference type="PROSITE-ProRule" id="PRU00192"/>
    </source>
</evidence>
<evidence type="ECO:0000255" key="5">
    <source>
        <dbReference type="PROSITE-ProRule" id="PRU10028"/>
    </source>
</evidence>
<evidence type="ECO:0000256" key="6">
    <source>
        <dbReference type="SAM" id="MobiDB-lite"/>
    </source>
</evidence>
<protein>
    <recommendedName>
        <fullName>Tyrosine-protein kinase transforming protein Src</fullName>
        <ecNumber>2.7.10.2</ecNumber>
    </recommendedName>
    <alternativeName>
        <fullName>pp60v-src</fullName>
        <shortName>p60-Src</shortName>
        <shortName>v-Src</shortName>
    </alternativeName>
</protein>
<name>SRC_AVISS</name>
<accession>P14084</accession>
<reference key="1">
    <citation type="journal article" date="1986" name="Mol. Cell. Biol.">
        <title>Activation of the cellular src gene by transducing retrovirus.</title>
        <authorList>
            <person name="Ikawa S."/>
            <person name="Hagino-Yamagishi K."/>
            <person name="Kawai S."/>
            <person name="Yamamoto T."/>
            <person name="Toyoshima K."/>
        </authorList>
    </citation>
    <scope>NUCLEOTIDE SEQUENCE</scope>
</reference>
<organism>
    <name type="scientific">Avian sarcoma virus (strain S1)</name>
    <dbReference type="NCBI Taxonomy" id="11881"/>
    <lineage>
        <taxon>Viruses</taxon>
        <taxon>Riboviria</taxon>
        <taxon>Pararnavirae</taxon>
        <taxon>Artverviricota</taxon>
        <taxon>Revtraviricetes</taxon>
        <taxon>Ortervirales</taxon>
        <taxon>Retroviridae</taxon>
        <taxon>Orthoretrovirinae</taxon>
        <taxon>Alpharetrovirus</taxon>
        <taxon>Avian sarcoma virus</taxon>
    </lineage>
</organism>
<proteinExistence type="inferred from homology"/>
<keyword id="KW-0067">ATP-binding</keyword>
<keyword id="KW-0418">Kinase</keyword>
<keyword id="KW-0449">Lipoprotein</keyword>
<keyword id="KW-0519">Myristate</keyword>
<keyword id="KW-0547">Nucleotide-binding</keyword>
<keyword id="KW-0553">Oncogene</keyword>
<keyword id="KW-0597">Phosphoprotein</keyword>
<keyword id="KW-0727">SH2 domain</keyword>
<keyword id="KW-0728">SH3 domain</keyword>
<keyword id="KW-0808">Transferase</keyword>
<keyword id="KW-0829">Tyrosine-protein kinase</keyword>
<dbReference type="EC" id="2.7.10.2"/>
<dbReference type="PIR" id="A25375">
    <property type="entry name" value="TVFVS1"/>
</dbReference>
<dbReference type="BMRB" id="P14084"/>
<dbReference type="SMR" id="P14084"/>
<dbReference type="BRENDA" id="2.7.10.2">
    <property type="organism ID" value="600"/>
</dbReference>
<dbReference type="GO" id="GO:0005524">
    <property type="term" value="F:ATP binding"/>
    <property type="evidence" value="ECO:0007669"/>
    <property type="project" value="UniProtKB-KW"/>
</dbReference>
<dbReference type="GO" id="GO:0004715">
    <property type="term" value="F:non-membrane spanning protein tyrosine kinase activity"/>
    <property type="evidence" value="ECO:0007669"/>
    <property type="project" value="UniProtKB-EC"/>
</dbReference>
<dbReference type="CDD" id="cd14203">
    <property type="entry name" value="PTKc_Src_Fyn_like"/>
    <property type="match status" value="1"/>
</dbReference>
<dbReference type="CDD" id="cd10365">
    <property type="entry name" value="SH2_Src_Src"/>
    <property type="match status" value="1"/>
</dbReference>
<dbReference type="CDD" id="cd12008">
    <property type="entry name" value="SH3_Src"/>
    <property type="match status" value="1"/>
</dbReference>
<dbReference type="FunFam" id="1.10.510.10:FF:000553">
    <property type="entry name" value="Tyrosine-protein kinase"/>
    <property type="match status" value="1"/>
</dbReference>
<dbReference type="FunFam" id="2.30.30.40:FF:000083">
    <property type="entry name" value="Tyrosine-protein kinase"/>
    <property type="match status" value="1"/>
</dbReference>
<dbReference type="FunFam" id="3.30.200.20:FF:000016">
    <property type="entry name" value="Tyrosine-protein kinase"/>
    <property type="match status" value="1"/>
</dbReference>
<dbReference type="FunFam" id="3.30.505.10:FF:000001">
    <property type="entry name" value="Tyrosine-protein kinase"/>
    <property type="match status" value="1"/>
</dbReference>
<dbReference type="Gene3D" id="3.30.200.20">
    <property type="entry name" value="Phosphorylase Kinase, domain 1"/>
    <property type="match status" value="1"/>
</dbReference>
<dbReference type="Gene3D" id="3.30.505.10">
    <property type="entry name" value="SH2 domain"/>
    <property type="match status" value="1"/>
</dbReference>
<dbReference type="Gene3D" id="2.30.30.40">
    <property type="entry name" value="SH3 Domains"/>
    <property type="match status" value="1"/>
</dbReference>
<dbReference type="Gene3D" id="1.10.510.10">
    <property type="entry name" value="Transferase(Phosphotransferase) domain 1"/>
    <property type="match status" value="1"/>
</dbReference>
<dbReference type="InterPro" id="IPR011009">
    <property type="entry name" value="Kinase-like_dom_sf"/>
</dbReference>
<dbReference type="InterPro" id="IPR050198">
    <property type="entry name" value="Non-receptor_tyrosine_kinases"/>
</dbReference>
<dbReference type="InterPro" id="IPR000719">
    <property type="entry name" value="Prot_kinase_dom"/>
</dbReference>
<dbReference type="InterPro" id="IPR017441">
    <property type="entry name" value="Protein_kinase_ATP_BS"/>
</dbReference>
<dbReference type="InterPro" id="IPR001245">
    <property type="entry name" value="Ser-Thr/Tyr_kinase_cat_dom"/>
</dbReference>
<dbReference type="InterPro" id="IPR000980">
    <property type="entry name" value="SH2"/>
</dbReference>
<dbReference type="InterPro" id="IPR036860">
    <property type="entry name" value="SH2_dom_sf"/>
</dbReference>
<dbReference type="InterPro" id="IPR036028">
    <property type="entry name" value="SH3-like_dom_sf"/>
</dbReference>
<dbReference type="InterPro" id="IPR001452">
    <property type="entry name" value="SH3_domain"/>
</dbReference>
<dbReference type="InterPro" id="IPR008266">
    <property type="entry name" value="Tyr_kinase_AS"/>
</dbReference>
<dbReference type="InterPro" id="IPR020635">
    <property type="entry name" value="Tyr_kinase_cat_dom"/>
</dbReference>
<dbReference type="PANTHER" id="PTHR24418">
    <property type="entry name" value="TYROSINE-PROTEIN KINASE"/>
    <property type="match status" value="1"/>
</dbReference>
<dbReference type="Pfam" id="PF07714">
    <property type="entry name" value="PK_Tyr_Ser-Thr"/>
    <property type="match status" value="1"/>
</dbReference>
<dbReference type="Pfam" id="PF00017">
    <property type="entry name" value="SH2"/>
    <property type="match status" value="1"/>
</dbReference>
<dbReference type="Pfam" id="PF00018">
    <property type="entry name" value="SH3_1"/>
    <property type="match status" value="1"/>
</dbReference>
<dbReference type="PRINTS" id="PR00401">
    <property type="entry name" value="SH2DOMAIN"/>
</dbReference>
<dbReference type="PRINTS" id="PR00452">
    <property type="entry name" value="SH3DOMAIN"/>
</dbReference>
<dbReference type="PRINTS" id="PR00109">
    <property type="entry name" value="TYRKINASE"/>
</dbReference>
<dbReference type="SMART" id="SM00252">
    <property type="entry name" value="SH2"/>
    <property type="match status" value="1"/>
</dbReference>
<dbReference type="SMART" id="SM00326">
    <property type="entry name" value="SH3"/>
    <property type="match status" value="1"/>
</dbReference>
<dbReference type="SMART" id="SM00219">
    <property type="entry name" value="TyrKc"/>
    <property type="match status" value="1"/>
</dbReference>
<dbReference type="SUPFAM" id="SSF56112">
    <property type="entry name" value="Protein kinase-like (PK-like)"/>
    <property type="match status" value="1"/>
</dbReference>
<dbReference type="SUPFAM" id="SSF55550">
    <property type="entry name" value="SH2 domain"/>
    <property type="match status" value="1"/>
</dbReference>
<dbReference type="SUPFAM" id="SSF50044">
    <property type="entry name" value="SH3-domain"/>
    <property type="match status" value="1"/>
</dbReference>
<dbReference type="PROSITE" id="PS00107">
    <property type="entry name" value="PROTEIN_KINASE_ATP"/>
    <property type="match status" value="1"/>
</dbReference>
<dbReference type="PROSITE" id="PS50011">
    <property type="entry name" value="PROTEIN_KINASE_DOM"/>
    <property type="match status" value="1"/>
</dbReference>
<dbReference type="PROSITE" id="PS00109">
    <property type="entry name" value="PROTEIN_KINASE_TYR"/>
    <property type="match status" value="1"/>
</dbReference>
<dbReference type="PROSITE" id="PS50001">
    <property type="entry name" value="SH2"/>
    <property type="match status" value="1"/>
</dbReference>
<dbReference type="PROSITE" id="PS50002">
    <property type="entry name" value="SH3"/>
    <property type="match status" value="1"/>
</dbReference>
<gene>
    <name type="primary">V-SRC</name>
</gene>
<comment type="function">
    <text>This phosphoprotein, required for both the initiation and the maintenance of neoplastic transformation, is a protein kinase that catalyzes the phosphorylation of tyrosine residues in vitro.</text>
</comment>
<comment type="catalytic activity">
    <reaction evidence="5">
        <text>L-tyrosyl-[protein] + ATP = O-phospho-L-tyrosyl-[protein] + ADP + H(+)</text>
        <dbReference type="Rhea" id="RHEA:10596"/>
        <dbReference type="Rhea" id="RHEA-COMP:10136"/>
        <dbReference type="Rhea" id="RHEA-COMP:20101"/>
        <dbReference type="ChEBI" id="CHEBI:15378"/>
        <dbReference type="ChEBI" id="CHEBI:30616"/>
        <dbReference type="ChEBI" id="CHEBI:46858"/>
        <dbReference type="ChEBI" id="CHEBI:61978"/>
        <dbReference type="ChEBI" id="CHEBI:456216"/>
        <dbReference type="EC" id="2.7.10.2"/>
    </reaction>
</comment>
<comment type="PTM">
    <text>The phosphorylated form is termed pp60v-src.</text>
</comment>
<comment type="similarity">
    <text evidence="2">Belongs to the protein kinase superfamily. Tyr protein kinase family. SRC subfamily.</text>
</comment>